<reference key="1">
    <citation type="journal article" date="2006" name="J. Bacteriol.">
        <title>Complete genome sequence of Yersinia pestis strains Antiqua and Nepal516: evidence of gene reduction in an emerging pathogen.</title>
        <authorList>
            <person name="Chain P.S.G."/>
            <person name="Hu P."/>
            <person name="Malfatti S.A."/>
            <person name="Radnedge L."/>
            <person name="Larimer F."/>
            <person name="Vergez L.M."/>
            <person name="Worsham P."/>
            <person name="Chu M.C."/>
            <person name="Andersen G.L."/>
        </authorList>
    </citation>
    <scope>NUCLEOTIDE SEQUENCE [LARGE SCALE GENOMIC DNA]</scope>
    <source>
        <strain>Nepal516</strain>
    </source>
</reference>
<reference key="2">
    <citation type="submission" date="2009-04" db="EMBL/GenBank/DDBJ databases">
        <title>Yersinia pestis Nepal516A whole genome shotgun sequencing project.</title>
        <authorList>
            <person name="Plunkett G. III"/>
            <person name="Anderson B.D."/>
            <person name="Baumler D.J."/>
            <person name="Burland V."/>
            <person name="Cabot E.L."/>
            <person name="Glasner J.D."/>
            <person name="Mau B."/>
            <person name="Neeno-Eckwall E."/>
            <person name="Perna N.T."/>
            <person name="Munk A.C."/>
            <person name="Tapia R."/>
            <person name="Green L.D."/>
            <person name="Rogers Y.C."/>
            <person name="Detter J.C."/>
            <person name="Bruce D.C."/>
            <person name="Brettin T.S."/>
        </authorList>
    </citation>
    <scope>NUCLEOTIDE SEQUENCE [LARGE SCALE GENOMIC DNA]</scope>
    <source>
        <strain>Nepal516</strain>
    </source>
</reference>
<name>WZYE_YERPN</name>
<proteinExistence type="inferred from homology"/>
<dbReference type="EMBL" id="CP000305">
    <property type="protein sequence ID" value="ABG16440.1"/>
    <property type="molecule type" value="Genomic_DNA"/>
</dbReference>
<dbReference type="EMBL" id="ACNQ01000001">
    <property type="protein sequence ID" value="EEO78548.1"/>
    <property type="molecule type" value="Genomic_DNA"/>
</dbReference>
<dbReference type="RefSeq" id="WP_002211978.1">
    <property type="nucleotide sequence ID" value="NZ_ACNQ01000001.1"/>
</dbReference>
<dbReference type="GeneID" id="57974847"/>
<dbReference type="KEGG" id="ypn:YPN_0107"/>
<dbReference type="HOGENOM" id="CLU_049711_0_0_6"/>
<dbReference type="UniPathway" id="UPA00566"/>
<dbReference type="Proteomes" id="UP000008936">
    <property type="component" value="Chromosome"/>
</dbReference>
<dbReference type="GO" id="GO:0005886">
    <property type="term" value="C:plasma membrane"/>
    <property type="evidence" value="ECO:0007669"/>
    <property type="project" value="UniProtKB-SubCell"/>
</dbReference>
<dbReference type="GO" id="GO:0009246">
    <property type="term" value="P:enterobacterial common antigen biosynthetic process"/>
    <property type="evidence" value="ECO:0007669"/>
    <property type="project" value="UniProtKB-UniRule"/>
</dbReference>
<dbReference type="HAMAP" id="MF_01003">
    <property type="entry name" value="WzyE"/>
    <property type="match status" value="1"/>
</dbReference>
<dbReference type="InterPro" id="IPR010691">
    <property type="entry name" value="WzyE"/>
</dbReference>
<dbReference type="NCBIfam" id="NF002820">
    <property type="entry name" value="PRK02975.1"/>
    <property type="match status" value="1"/>
</dbReference>
<dbReference type="Pfam" id="PF06899">
    <property type="entry name" value="WzyE"/>
    <property type="match status" value="1"/>
</dbReference>
<keyword id="KW-0997">Cell inner membrane</keyword>
<keyword id="KW-1003">Cell membrane</keyword>
<keyword id="KW-0472">Membrane</keyword>
<keyword id="KW-0812">Transmembrane</keyword>
<keyword id="KW-1133">Transmembrane helix</keyword>
<accession>Q1CNJ0</accession>
<accession>D1Q0Z4</accession>
<evidence type="ECO:0000255" key="1">
    <source>
        <dbReference type="HAMAP-Rule" id="MF_01003"/>
    </source>
</evidence>
<organism>
    <name type="scientific">Yersinia pestis bv. Antiqua (strain Nepal516)</name>
    <dbReference type="NCBI Taxonomy" id="377628"/>
    <lineage>
        <taxon>Bacteria</taxon>
        <taxon>Pseudomonadati</taxon>
        <taxon>Pseudomonadota</taxon>
        <taxon>Gammaproteobacteria</taxon>
        <taxon>Enterobacterales</taxon>
        <taxon>Yersiniaceae</taxon>
        <taxon>Yersinia</taxon>
    </lineage>
</organism>
<gene>
    <name evidence="1" type="primary">wzyE</name>
    <name type="ordered locus">YPN_0107</name>
    <name type="ORF">YP516_0060</name>
</gene>
<feature type="chain" id="PRO_1000062769" description="Probable ECA polymerase">
    <location>
        <begin position="1"/>
        <end position="454"/>
    </location>
</feature>
<feature type="transmembrane region" description="Helical" evidence="1">
    <location>
        <begin position="3"/>
        <end position="23"/>
    </location>
</feature>
<feature type="transmembrane region" description="Helical" evidence="1">
    <location>
        <begin position="39"/>
        <end position="59"/>
    </location>
</feature>
<feature type="transmembrane region" description="Helical" evidence="1">
    <location>
        <begin position="61"/>
        <end position="81"/>
    </location>
</feature>
<feature type="transmembrane region" description="Helical" evidence="1">
    <location>
        <begin position="119"/>
        <end position="139"/>
    </location>
</feature>
<feature type="transmembrane region" description="Helical" evidence="1">
    <location>
        <begin position="154"/>
        <end position="174"/>
    </location>
</feature>
<feature type="transmembrane region" description="Helical" evidence="1">
    <location>
        <begin position="180"/>
        <end position="200"/>
    </location>
</feature>
<feature type="transmembrane region" description="Helical" evidence="1">
    <location>
        <begin position="201"/>
        <end position="221"/>
    </location>
</feature>
<feature type="transmembrane region" description="Helical" evidence="1">
    <location>
        <begin position="222"/>
        <end position="242"/>
    </location>
</feature>
<feature type="transmembrane region" description="Helical" evidence="1">
    <location>
        <begin position="340"/>
        <end position="360"/>
    </location>
</feature>
<feature type="transmembrane region" description="Helical" evidence="1">
    <location>
        <begin position="377"/>
        <end position="397"/>
    </location>
</feature>
<feature type="transmembrane region" description="Helical" evidence="1">
    <location>
        <begin position="409"/>
        <end position="429"/>
    </location>
</feature>
<protein>
    <recommendedName>
        <fullName evidence="1">Probable ECA polymerase</fullName>
    </recommendedName>
</protein>
<sequence>MTLGQFGGLFCIYLIAVIFILTLTYQEFRRVKFNFNVLFSMLYLLTFYFGFPLTCMLVFQFGVAVVPVEYLLYAMLSATAFYGIYYVTYKTRLRQPRSQPRTPIFTMNRVETNLTWVLLALVAVGTVGIFFMQNGFLLFKLDSYSKIFSSDVSGVALKRFFYFFIPAMLVVYFLKQDRRAWFFFLASTVAFGILTYVIVGGTRANIIIAFSLFLFIGIVRGWITLWMLAAAGVFGIVGMFWLALKRYGLDVNGAEAFYTFLYLTRDTFSPWENLGLLLQNYDKIDFQGLAPIVRDFYVFIPSALWPERPDLVLNTANYFTWDVLDNHSGLAISPTLIGSLVVMGGVLFIPLGAIVVGLIIKWFDWLYEQGKAESNRYKAAILQSFCFGAVFNIIVLAREGLDSFVSRVVFFCVIFGACLVLAKLLYWLFDTAGLIKRQGIKSNRLSTPNAGNQL</sequence>
<comment type="function">
    <text evidence="1">Probably involved in the polymerization of enterobacterial common antigen (ECA) trisaccharide repeat units.</text>
</comment>
<comment type="pathway">
    <text evidence="1">Bacterial outer membrane biogenesis; enterobacterial common antigen biosynthesis.</text>
</comment>
<comment type="subunit">
    <text evidence="1">Probably part of a complex composed of WzxE, WzyE and WzzE.</text>
</comment>
<comment type="subcellular location">
    <subcellularLocation>
        <location evidence="1">Cell inner membrane</location>
        <topology evidence="1">Multi-pass membrane protein</topology>
    </subcellularLocation>
</comment>
<comment type="similarity">
    <text evidence="1">Belongs to the WzyE family.</text>
</comment>